<comment type="function">
    <text evidence="1">Cleaves the N-terminal amino acid of tripeptides.</text>
</comment>
<comment type="catalytic activity">
    <reaction evidence="1">
        <text>Release of the N-terminal residue from a tripeptide.</text>
        <dbReference type="EC" id="3.4.11.4"/>
    </reaction>
</comment>
<comment type="cofactor">
    <cofactor evidence="1">
        <name>Zn(2+)</name>
        <dbReference type="ChEBI" id="CHEBI:29105"/>
    </cofactor>
    <text evidence="1">Binds 2 Zn(2+) ions per subunit.</text>
</comment>
<comment type="subcellular location">
    <subcellularLocation>
        <location evidence="1">Cytoplasm</location>
    </subcellularLocation>
</comment>
<comment type="similarity">
    <text evidence="1">Belongs to the peptidase M20B family.</text>
</comment>
<name>PEPT_SALPA</name>
<accession>Q5PMK2</accession>
<protein>
    <recommendedName>
        <fullName evidence="1">Peptidase T</fullName>
        <ecNumber evidence="1">3.4.11.4</ecNumber>
    </recommendedName>
    <alternativeName>
        <fullName evidence="1">Aminotripeptidase</fullName>
        <shortName evidence="1">Tripeptidase</shortName>
    </alternativeName>
    <alternativeName>
        <fullName evidence="1">Tripeptide aminopeptidase</fullName>
    </alternativeName>
</protein>
<sequence length="409" mass="44921">MDKLLERFLHYVSLDTQSKSGVRQVPSTEGQWKLLRLLKQQLEEMGLVNITLSEKGTLMATLPANVEGDIPAIGFISHVDTSPDFSGKNVNPQIVENYRGGDIALGIGDEVLSPVMFPVLHQLLGQTLITTDGKTLLGADDKAGVAEIMTALAVLKGNPIPHGEIKVAFTPDEEVGKGAKHFDVEEFGAQWAYTVDGGGVGELEFENFNAASVNIKIVGNNVHPGTAKGVMVNALSLAARIHAEVPADEAPETTEGYEGFYHLASMKGTVDRAEMHYIIRDFDRKQFEARKRKMMEIAKKVGKGLHPDCYIELVIEDSYYNMREKVVEHPHILDIAQQAMRDCHITPEMKPIRGGTDGAQLSFMGLPCPNLFTGGYNYHGKHEFVTLEGMEKAVQVIVRIAELTAKRGQ</sequence>
<evidence type="ECO:0000255" key="1">
    <source>
        <dbReference type="HAMAP-Rule" id="MF_00550"/>
    </source>
</evidence>
<gene>
    <name evidence="1" type="primary">pepT</name>
    <name type="ordered locus">SPA1623</name>
</gene>
<reference key="1">
    <citation type="journal article" date="2004" name="Nat. Genet.">
        <title>Comparison of genome degradation in Paratyphi A and Typhi, human-restricted serovars of Salmonella enterica that cause typhoid.</title>
        <authorList>
            <person name="McClelland M."/>
            <person name="Sanderson K.E."/>
            <person name="Clifton S.W."/>
            <person name="Latreille P."/>
            <person name="Porwollik S."/>
            <person name="Sabo A."/>
            <person name="Meyer R."/>
            <person name="Bieri T."/>
            <person name="Ozersky P."/>
            <person name="McLellan M."/>
            <person name="Harkins C.R."/>
            <person name="Wang C."/>
            <person name="Nguyen C."/>
            <person name="Berghoff A."/>
            <person name="Elliott G."/>
            <person name="Kohlberg S."/>
            <person name="Strong C."/>
            <person name="Du F."/>
            <person name="Carter J."/>
            <person name="Kremizki C."/>
            <person name="Layman D."/>
            <person name="Leonard S."/>
            <person name="Sun H."/>
            <person name="Fulton L."/>
            <person name="Nash W."/>
            <person name="Miner T."/>
            <person name="Minx P."/>
            <person name="Delehaunty K."/>
            <person name="Fronick C."/>
            <person name="Magrini V."/>
            <person name="Nhan M."/>
            <person name="Warren W."/>
            <person name="Florea L."/>
            <person name="Spieth J."/>
            <person name="Wilson R.K."/>
        </authorList>
    </citation>
    <scope>NUCLEOTIDE SEQUENCE [LARGE SCALE GENOMIC DNA]</scope>
    <source>
        <strain>ATCC 9150 / SARB42</strain>
    </source>
</reference>
<organism>
    <name type="scientific">Salmonella paratyphi A (strain ATCC 9150 / SARB42)</name>
    <dbReference type="NCBI Taxonomy" id="295319"/>
    <lineage>
        <taxon>Bacteria</taxon>
        <taxon>Pseudomonadati</taxon>
        <taxon>Pseudomonadota</taxon>
        <taxon>Gammaproteobacteria</taxon>
        <taxon>Enterobacterales</taxon>
        <taxon>Enterobacteriaceae</taxon>
        <taxon>Salmonella</taxon>
    </lineage>
</organism>
<feature type="chain" id="PRO_0000185310" description="Peptidase T">
    <location>
        <begin position="1"/>
        <end position="409"/>
    </location>
</feature>
<feature type="active site" evidence="1">
    <location>
        <position position="80"/>
    </location>
</feature>
<feature type="active site" description="Proton acceptor" evidence="1">
    <location>
        <position position="173"/>
    </location>
</feature>
<feature type="binding site" evidence="1">
    <location>
        <position position="78"/>
    </location>
    <ligand>
        <name>Zn(2+)</name>
        <dbReference type="ChEBI" id="CHEBI:29105"/>
        <label>1</label>
    </ligand>
</feature>
<feature type="binding site" evidence="1">
    <location>
        <position position="140"/>
    </location>
    <ligand>
        <name>Zn(2+)</name>
        <dbReference type="ChEBI" id="CHEBI:29105"/>
        <label>1</label>
    </ligand>
</feature>
<feature type="binding site" evidence="1">
    <location>
        <position position="140"/>
    </location>
    <ligand>
        <name>Zn(2+)</name>
        <dbReference type="ChEBI" id="CHEBI:29105"/>
        <label>2</label>
    </ligand>
</feature>
<feature type="binding site" evidence="1">
    <location>
        <position position="174"/>
    </location>
    <ligand>
        <name>Zn(2+)</name>
        <dbReference type="ChEBI" id="CHEBI:29105"/>
        <label>2</label>
    </ligand>
</feature>
<feature type="binding site" evidence="1">
    <location>
        <position position="196"/>
    </location>
    <ligand>
        <name>Zn(2+)</name>
        <dbReference type="ChEBI" id="CHEBI:29105"/>
        <label>1</label>
    </ligand>
</feature>
<feature type="binding site" evidence="1">
    <location>
        <position position="379"/>
    </location>
    <ligand>
        <name>Zn(2+)</name>
        <dbReference type="ChEBI" id="CHEBI:29105"/>
        <label>2</label>
    </ligand>
</feature>
<proteinExistence type="inferred from homology"/>
<dbReference type="EC" id="3.4.11.4" evidence="1"/>
<dbReference type="EMBL" id="CP000026">
    <property type="protein sequence ID" value="AAV77550.1"/>
    <property type="molecule type" value="Genomic_DNA"/>
</dbReference>
<dbReference type="RefSeq" id="WP_000359418.1">
    <property type="nucleotide sequence ID" value="NC_006511.1"/>
</dbReference>
<dbReference type="SMR" id="Q5PMK2"/>
<dbReference type="MEROPS" id="M20.003"/>
<dbReference type="KEGG" id="spt:SPA1623"/>
<dbReference type="HOGENOM" id="CLU_053676_0_0_6"/>
<dbReference type="Proteomes" id="UP000008185">
    <property type="component" value="Chromosome"/>
</dbReference>
<dbReference type="GO" id="GO:0005829">
    <property type="term" value="C:cytosol"/>
    <property type="evidence" value="ECO:0007669"/>
    <property type="project" value="TreeGrafter"/>
</dbReference>
<dbReference type="GO" id="GO:0008237">
    <property type="term" value="F:metallopeptidase activity"/>
    <property type="evidence" value="ECO:0007669"/>
    <property type="project" value="UniProtKB-KW"/>
</dbReference>
<dbReference type="GO" id="GO:0045148">
    <property type="term" value="F:tripeptide aminopeptidase activity"/>
    <property type="evidence" value="ECO:0007669"/>
    <property type="project" value="UniProtKB-UniRule"/>
</dbReference>
<dbReference type="GO" id="GO:0008270">
    <property type="term" value="F:zinc ion binding"/>
    <property type="evidence" value="ECO:0007669"/>
    <property type="project" value="UniProtKB-UniRule"/>
</dbReference>
<dbReference type="GO" id="GO:0043171">
    <property type="term" value="P:peptide catabolic process"/>
    <property type="evidence" value="ECO:0007669"/>
    <property type="project" value="UniProtKB-UniRule"/>
</dbReference>
<dbReference type="GO" id="GO:0006508">
    <property type="term" value="P:proteolysis"/>
    <property type="evidence" value="ECO:0007669"/>
    <property type="project" value="UniProtKB-UniRule"/>
</dbReference>
<dbReference type="CDD" id="cd03892">
    <property type="entry name" value="M20_peptT"/>
    <property type="match status" value="1"/>
</dbReference>
<dbReference type="FunFam" id="3.30.70.360:FF:000002">
    <property type="entry name" value="Peptidase T"/>
    <property type="match status" value="1"/>
</dbReference>
<dbReference type="Gene3D" id="3.30.70.360">
    <property type="match status" value="1"/>
</dbReference>
<dbReference type="Gene3D" id="3.40.630.10">
    <property type="entry name" value="Zn peptidases"/>
    <property type="match status" value="1"/>
</dbReference>
<dbReference type="HAMAP" id="MF_00550">
    <property type="entry name" value="Aminopeptidase_M20"/>
    <property type="match status" value="1"/>
</dbReference>
<dbReference type="InterPro" id="IPR001261">
    <property type="entry name" value="ArgE/DapE_CS"/>
</dbReference>
<dbReference type="InterPro" id="IPR036264">
    <property type="entry name" value="Bact_exopeptidase_dim_dom"/>
</dbReference>
<dbReference type="InterPro" id="IPR002933">
    <property type="entry name" value="Peptidase_M20"/>
</dbReference>
<dbReference type="InterPro" id="IPR011650">
    <property type="entry name" value="Peptidase_M20_dimer"/>
</dbReference>
<dbReference type="InterPro" id="IPR010161">
    <property type="entry name" value="Peptidase_M20B"/>
</dbReference>
<dbReference type="NCBIfam" id="TIGR01882">
    <property type="entry name" value="peptidase-T"/>
    <property type="match status" value="1"/>
</dbReference>
<dbReference type="NCBIfam" id="NF003976">
    <property type="entry name" value="PRK05469.1"/>
    <property type="match status" value="1"/>
</dbReference>
<dbReference type="NCBIfam" id="NF009920">
    <property type="entry name" value="PRK13381.1"/>
    <property type="match status" value="1"/>
</dbReference>
<dbReference type="PANTHER" id="PTHR42994">
    <property type="entry name" value="PEPTIDASE T"/>
    <property type="match status" value="1"/>
</dbReference>
<dbReference type="PANTHER" id="PTHR42994:SF1">
    <property type="entry name" value="PEPTIDASE T"/>
    <property type="match status" value="1"/>
</dbReference>
<dbReference type="Pfam" id="PF07687">
    <property type="entry name" value="M20_dimer"/>
    <property type="match status" value="1"/>
</dbReference>
<dbReference type="Pfam" id="PF01546">
    <property type="entry name" value="Peptidase_M20"/>
    <property type="match status" value="1"/>
</dbReference>
<dbReference type="PIRSF" id="PIRSF037215">
    <property type="entry name" value="Peptidase_M20B"/>
    <property type="match status" value="1"/>
</dbReference>
<dbReference type="SUPFAM" id="SSF55031">
    <property type="entry name" value="Bacterial exopeptidase dimerisation domain"/>
    <property type="match status" value="1"/>
</dbReference>
<dbReference type="SUPFAM" id="SSF53187">
    <property type="entry name" value="Zn-dependent exopeptidases"/>
    <property type="match status" value="1"/>
</dbReference>
<dbReference type="PROSITE" id="PS00758">
    <property type="entry name" value="ARGE_DAPE_CPG2_1"/>
    <property type="match status" value="1"/>
</dbReference>
<dbReference type="PROSITE" id="PS00759">
    <property type="entry name" value="ARGE_DAPE_CPG2_2"/>
    <property type="match status" value="1"/>
</dbReference>
<keyword id="KW-0031">Aminopeptidase</keyword>
<keyword id="KW-0963">Cytoplasm</keyword>
<keyword id="KW-0378">Hydrolase</keyword>
<keyword id="KW-0479">Metal-binding</keyword>
<keyword id="KW-0482">Metalloprotease</keyword>
<keyword id="KW-0645">Protease</keyword>
<keyword id="KW-0862">Zinc</keyword>